<dbReference type="EMBL" id="AM233362">
    <property type="protein sequence ID" value="CAJ78693.1"/>
    <property type="molecule type" value="Genomic_DNA"/>
</dbReference>
<dbReference type="RefSeq" id="WP_003014360.1">
    <property type="nucleotide sequence ID" value="NZ_CP009694.1"/>
</dbReference>
<dbReference type="SMR" id="Q2A5F4"/>
<dbReference type="KEGG" id="ftl:FTL_0252"/>
<dbReference type="Proteomes" id="UP000001944">
    <property type="component" value="Chromosome"/>
</dbReference>
<dbReference type="GO" id="GO:0022625">
    <property type="term" value="C:cytosolic large ribosomal subunit"/>
    <property type="evidence" value="ECO:0007669"/>
    <property type="project" value="TreeGrafter"/>
</dbReference>
<dbReference type="GO" id="GO:0008097">
    <property type="term" value="F:5S rRNA binding"/>
    <property type="evidence" value="ECO:0007669"/>
    <property type="project" value="TreeGrafter"/>
</dbReference>
<dbReference type="GO" id="GO:0003735">
    <property type="term" value="F:structural constituent of ribosome"/>
    <property type="evidence" value="ECO:0007669"/>
    <property type="project" value="InterPro"/>
</dbReference>
<dbReference type="GO" id="GO:0006412">
    <property type="term" value="P:translation"/>
    <property type="evidence" value="ECO:0007669"/>
    <property type="project" value="UniProtKB-UniRule"/>
</dbReference>
<dbReference type="CDD" id="cd00432">
    <property type="entry name" value="Ribosomal_L18_L5e"/>
    <property type="match status" value="1"/>
</dbReference>
<dbReference type="FunFam" id="3.30.420.100:FF:000001">
    <property type="entry name" value="50S ribosomal protein L18"/>
    <property type="match status" value="1"/>
</dbReference>
<dbReference type="Gene3D" id="3.30.420.100">
    <property type="match status" value="1"/>
</dbReference>
<dbReference type="HAMAP" id="MF_01337_B">
    <property type="entry name" value="Ribosomal_uL18_B"/>
    <property type="match status" value="1"/>
</dbReference>
<dbReference type="InterPro" id="IPR004389">
    <property type="entry name" value="Ribosomal_uL18_bac-type"/>
</dbReference>
<dbReference type="InterPro" id="IPR005484">
    <property type="entry name" value="Ribosomal_uL18_bac/euk"/>
</dbReference>
<dbReference type="NCBIfam" id="TIGR00060">
    <property type="entry name" value="L18_bact"/>
    <property type="match status" value="1"/>
</dbReference>
<dbReference type="PANTHER" id="PTHR12899">
    <property type="entry name" value="39S RIBOSOMAL PROTEIN L18, MITOCHONDRIAL"/>
    <property type="match status" value="1"/>
</dbReference>
<dbReference type="PANTHER" id="PTHR12899:SF3">
    <property type="entry name" value="LARGE RIBOSOMAL SUBUNIT PROTEIN UL18M"/>
    <property type="match status" value="1"/>
</dbReference>
<dbReference type="Pfam" id="PF00861">
    <property type="entry name" value="Ribosomal_L18p"/>
    <property type="match status" value="1"/>
</dbReference>
<dbReference type="SUPFAM" id="SSF53137">
    <property type="entry name" value="Translational machinery components"/>
    <property type="match status" value="1"/>
</dbReference>
<keyword id="KW-1185">Reference proteome</keyword>
<keyword id="KW-0687">Ribonucleoprotein</keyword>
<keyword id="KW-0689">Ribosomal protein</keyword>
<keyword id="KW-0694">RNA-binding</keyword>
<keyword id="KW-0699">rRNA-binding</keyword>
<reference key="1">
    <citation type="submission" date="2006-03" db="EMBL/GenBank/DDBJ databases">
        <title>Complete genome sequence of Francisella tularensis LVS (Live Vaccine Strain).</title>
        <authorList>
            <person name="Chain P."/>
            <person name="Larimer F."/>
            <person name="Land M."/>
            <person name="Stilwagen S."/>
            <person name="Larsson P."/>
            <person name="Bearden S."/>
            <person name="Chu M."/>
            <person name="Oyston P."/>
            <person name="Forsman M."/>
            <person name="Andersson S."/>
            <person name="Lindler L."/>
            <person name="Titball R."/>
            <person name="Garcia E."/>
        </authorList>
    </citation>
    <scope>NUCLEOTIDE SEQUENCE [LARGE SCALE GENOMIC DNA]</scope>
    <source>
        <strain>LVS</strain>
    </source>
</reference>
<name>RL18_FRATH</name>
<proteinExistence type="inferred from homology"/>
<feature type="chain" id="PRO_0000251314" description="Large ribosomal subunit protein uL18">
    <location>
        <begin position="1"/>
        <end position="117"/>
    </location>
</feature>
<comment type="function">
    <text evidence="1">This is one of the proteins that bind and probably mediate the attachment of the 5S RNA into the large ribosomal subunit, where it forms part of the central protuberance.</text>
</comment>
<comment type="subunit">
    <text evidence="1">Part of the 50S ribosomal subunit; part of the 5S rRNA/L5/L18/L25 subcomplex. Contacts the 5S and 23S rRNAs.</text>
</comment>
<comment type="similarity">
    <text evidence="1">Belongs to the universal ribosomal protein uL18 family.</text>
</comment>
<organism>
    <name type="scientific">Francisella tularensis subsp. holarctica (strain LVS)</name>
    <dbReference type="NCBI Taxonomy" id="376619"/>
    <lineage>
        <taxon>Bacteria</taxon>
        <taxon>Pseudomonadati</taxon>
        <taxon>Pseudomonadota</taxon>
        <taxon>Gammaproteobacteria</taxon>
        <taxon>Thiotrichales</taxon>
        <taxon>Francisellaceae</taxon>
        <taxon>Francisella</taxon>
    </lineage>
</organism>
<gene>
    <name evidence="1" type="primary">rplR</name>
    <name type="ordered locus">FTL_0252</name>
</gene>
<evidence type="ECO:0000255" key="1">
    <source>
        <dbReference type="HAMAP-Rule" id="MF_01337"/>
    </source>
</evidence>
<evidence type="ECO:0000305" key="2"/>
<protein>
    <recommendedName>
        <fullName evidence="1">Large ribosomal subunit protein uL18</fullName>
    </recommendedName>
    <alternativeName>
        <fullName evidence="2">50S ribosomal protein L18</fullName>
    </alternativeName>
</protein>
<sequence length="117" mass="13036">MDKKTARLSRSKRTRIKLRELGHTRLCVYRTPRHVYAQVISGDGSTVLVAASTVEKDVKAKCKYTGNVESAAIVGEIIADRCKEKGISQVAFDRSGYKYHGRVKALVEAAREHGLQF</sequence>
<accession>Q2A5F4</accession>